<name>ASTN2_MOUSE</name>
<evidence type="ECO:0000250" key="1"/>
<evidence type="ECO:0000250" key="2">
    <source>
        <dbReference type="UniProtKB" id="O75129"/>
    </source>
</evidence>
<evidence type="ECO:0000255" key="3"/>
<evidence type="ECO:0000256" key="4">
    <source>
        <dbReference type="SAM" id="MobiDB-lite"/>
    </source>
</evidence>
<evidence type="ECO:0000269" key="5">
    <source>
    </source>
</evidence>
<evidence type="ECO:0000303" key="6">
    <source>
    </source>
</evidence>
<evidence type="ECO:0000303" key="7">
    <source>
    </source>
</evidence>
<evidence type="ECO:0000305" key="8"/>
<evidence type="ECO:0000305" key="9">
    <source>
    </source>
</evidence>
<dbReference type="EMBL" id="AK172987">
    <property type="protein sequence ID" value="BAD32265.1"/>
    <property type="status" value="ALT_INIT"/>
    <property type="molecule type" value="mRNA"/>
</dbReference>
<dbReference type="EMBL" id="AL691438">
    <property type="status" value="NOT_ANNOTATED_CDS"/>
    <property type="molecule type" value="Genomic_DNA"/>
</dbReference>
<dbReference type="EMBL" id="AL691454">
    <property type="status" value="NOT_ANNOTATED_CDS"/>
    <property type="molecule type" value="Genomic_DNA"/>
</dbReference>
<dbReference type="EMBL" id="AL691456">
    <property type="status" value="NOT_ANNOTATED_CDS"/>
    <property type="molecule type" value="Genomic_DNA"/>
</dbReference>
<dbReference type="EMBL" id="AL691474">
    <property type="status" value="NOT_ANNOTATED_CDS"/>
    <property type="molecule type" value="Genomic_DNA"/>
</dbReference>
<dbReference type="EMBL" id="AL691475">
    <property type="status" value="NOT_ANNOTATED_CDS"/>
    <property type="molecule type" value="Genomic_DNA"/>
</dbReference>
<dbReference type="EMBL" id="AL713878">
    <property type="status" value="NOT_ANNOTATED_CDS"/>
    <property type="molecule type" value="Genomic_DNA"/>
</dbReference>
<dbReference type="EMBL" id="AL731829">
    <property type="status" value="NOT_ANNOTATED_CDS"/>
    <property type="molecule type" value="Genomic_DNA"/>
</dbReference>
<dbReference type="EMBL" id="AL837523">
    <property type="status" value="NOT_ANNOTATED_CDS"/>
    <property type="molecule type" value="Genomic_DNA"/>
</dbReference>
<dbReference type="CCDS" id="CCDS18268.1">
    <molecule id="Q80Z10-3"/>
</dbReference>
<dbReference type="CCDS" id="CCDS18269.1">
    <molecule id="Q80Z10-1"/>
</dbReference>
<dbReference type="RefSeq" id="NP_062387.2">
    <molecule id="Q80Z10-3"/>
    <property type="nucleotide sequence ID" value="NM_019514.3"/>
</dbReference>
<dbReference type="RefSeq" id="NP_996992.1">
    <molecule id="Q80Z10-1"/>
    <property type="nucleotide sequence ID" value="NM_207109.2"/>
</dbReference>
<dbReference type="RefSeq" id="XP_006538167.1">
    <molecule id="Q80Z10-2"/>
    <property type="nucleotide sequence ID" value="XM_006538104.4"/>
</dbReference>
<dbReference type="SMR" id="Q80Z10"/>
<dbReference type="BioGRID" id="207806">
    <property type="interactions" value="1"/>
</dbReference>
<dbReference type="FunCoup" id="Q80Z10">
    <property type="interactions" value="129"/>
</dbReference>
<dbReference type="STRING" id="10090.ENSMUSP00000065786"/>
<dbReference type="GlyConnect" id="2137">
    <property type="glycosylation" value="1 N-Linked glycan (1 site)"/>
</dbReference>
<dbReference type="GlyCosmos" id="Q80Z10">
    <property type="glycosylation" value="3 sites, 1 glycan"/>
</dbReference>
<dbReference type="GlyGen" id="Q80Z10">
    <property type="glycosylation" value="6 sites, 3 N-linked glycans (3 sites), 1 O-linked glycan (1 site)"/>
</dbReference>
<dbReference type="iPTMnet" id="Q80Z10"/>
<dbReference type="PhosphoSitePlus" id="Q80Z10"/>
<dbReference type="SwissPalm" id="Q80Z10"/>
<dbReference type="PaxDb" id="10090-ENSMUSP00000065786"/>
<dbReference type="ProteomicsDB" id="277259">
    <molecule id="Q80Z10-1"/>
</dbReference>
<dbReference type="ProteomicsDB" id="277260">
    <molecule id="Q80Z10-2"/>
</dbReference>
<dbReference type="ProteomicsDB" id="277261">
    <molecule id="Q80Z10-3"/>
</dbReference>
<dbReference type="Antibodypedia" id="15627">
    <property type="antibodies" value="123 antibodies from 22 providers"/>
</dbReference>
<dbReference type="Ensembl" id="ENSMUST00000068214.11">
    <molecule id="Q80Z10-1"/>
    <property type="protein sequence ID" value="ENSMUSP00000065786.5"/>
    <property type="gene ID" value="ENSMUSG00000028373.17"/>
</dbReference>
<dbReference type="Ensembl" id="ENSMUST00000084496.3">
    <molecule id="Q80Z10-3"/>
    <property type="protein sequence ID" value="ENSMUSP00000081540.3"/>
    <property type="gene ID" value="ENSMUSG00000028373.17"/>
</dbReference>
<dbReference type="GeneID" id="56079"/>
<dbReference type="KEGG" id="mmu:56079"/>
<dbReference type="UCSC" id="uc008thn.1">
    <molecule id="Q80Z10-1"/>
    <property type="organism name" value="mouse"/>
</dbReference>
<dbReference type="UCSC" id="uc008tho.1">
    <property type="organism name" value="mouse"/>
</dbReference>
<dbReference type="UCSC" id="uc008thp.1">
    <molecule id="Q80Z10-2"/>
    <property type="organism name" value="mouse"/>
</dbReference>
<dbReference type="AGR" id="MGI:1889277"/>
<dbReference type="CTD" id="23245"/>
<dbReference type="MGI" id="MGI:1889277">
    <property type="gene designation" value="Astn2"/>
</dbReference>
<dbReference type="VEuPathDB" id="HostDB:ENSMUSG00000028373"/>
<dbReference type="eggNOG" id="ENOG502R4QT">
    <property type="taxonomic scope" value="Eukaryota"/>
</dbReference>
<dbReference type="GeneTree" id="ENSGT00390000003140"/>
<dbReference type="InParanoid" id="Q80Z10"/>
<dbReference type="OMA" id="VXCPEEL"/>
<dbReference type="OrthoDB" id="9934301at2759"/>
<dbReference type="PhylomeDB" id="Q80Z10"/>
<dbReference type="TreeFam" id="TF332034"/>
<dbReference type="BioGRID-ORCS" id="56079">
    <property type="hits" value="4 hits in 48 CRISPR screens"/>
</dbReference>
<dbReference type="CD-CODE" id="CE726F99">
    <property type="entry name" value="Postsynaptic density"/>
</dbReference>
<dbReference type="ChiTaRS" id="Astn2">
    <property type="organism name" value="mouse"/>
</dbReference>
<dbReference type="PRO" id="PR:Q80Z10"/>
<dbReference type="Proteomes" id="UP000000589">
    <property type="component" value="Chromosome 4"/>
</dbReference>
<dbReference type="RNAct" id="Q80Z10">
    <property type="molecule type" value="protein"/>
</dbReference>
<dbReference type="Bgee" id="ENSMUSG00000028373">
    <property type="expression patterns" value="Expressed in neural tube mantle layer and 83 other cell types or tissues"/>
</dbReference>
<dbReference type="GO" id="GO:0005938">
    <property type="term" value="C:cell cortex"/>
    <property type="evidence" value="ECO:0007669"/>
    <property type="project" value="UniProtKB-SubCell"/>
</dbReference>
<dbReference type="GO" id="GO:0060187">
    <property type="term" value="C:cell pole"/>
    <property type="evidence" value="ECO:0000314"/>
    <property type="project" value="MGI"/>
</dbReference>
<dbReference type="GO" id="GO:0030136">
    <property type="term" value="C:clathrin-coated vesicle"/>
    <property type="evidence" value="ECO:0007669"/>
    <property type="project" value="UniProtKB-SubCell"/>
</dbReference>
<dbReference type="GO" id="GO:0005769">
    <property type="term" value="C:early endosome"/>
    <property type="evidence" value="ECO:0007669"/>
    <property type="project" value="UniProtKB-SubCell"/>
</dbReference>
<dbReference type="GO" id="GO:0005768">
    <property type="term" value="C:endosome"/>
    <property type="evidence" value="ECO:0000314"/>
    <property type="project" value="MGI"/>
</dbReference>
<dbReference type="GO" id="GO:0005770">
    <property type="term" value="C:late endosome"/>
    <property type="evidence" value="ECO:0007669"/>
    <property type="project" value="UniProtKB-SubCell"/>
</dbReference>
<dbReference type="GO" id="GO:0016020">
    <property type="term" value="C:membrane"/>
    <property type="evidence" value="ECO:0000314"/>
    <property type="project" value="MGI"/>
</dbReference>
<dbReference type="GO" id="GO:0043204">
    <property type="term" value="C:perikaryon"/>
    <property type="evidence" value="ECO:0007669"/>
    <property type="project" value="UniProtKB-SubCell"/>
</dbReference>
<dbReference type="GO" id="GO:0005509">
    <property type="term" value="F:calcium ion binding"/>
    <property type="evidence" value="ECO:0000250"/>
    <property type="project" value="UniProtKB"/>
</dbReference>
<dbReference type="GO" id="GO:0043533">
    <property type="term" value="F:inositol 1,3,4,5 tetrakisphosphate binding"/>
    <property type="evidence" value="ECO:0000250"/>
    <property type="project" value="UniProtKB"/>
</dbReference>
<dbReference type="GO" id="GO:0048105">
    <property type="term" value="P:establishment of body hair planar orientation"/>
    <property type="evidence" value="ECO:0000316"/>
    <property type="project" value="MGI"/>
</dbReference>
<dbReference type="GO" id="GO:2000009">
    <property type="term" value="P:negative regulation of protein localization to cell surface"/>
    <property type="evidence" value="ECO:0000314"/>
    <property type="project" value="MGI"/>
</dbReference>
<dbReference type="GO" id="GO:0001764">
    <property type="term" value="P:neuron migration"/>
    <property type="evidence" value="ECO:0007669"/>
    <property type="project" value="InterPro"/>
</dbReference>
<dbReference type="GO" id="GO:0034394">
    <property type="term" value="P:protein localization to cell surface"/>
    <property type="evidence" value="ECO:0000314"/>
    <property type="project" value="MGI"/>
</dbReference>
<dbReference type="GO" id="GO:0015031">
    <property type="term" value="P:protein transport"/>
    <property type="evidence" value="ECO:0007669"/>
    <property type="project" value="UniProtKB-KW"/>
</dbReference>
<dbReference type="CDD" id="cd00063">
    <property type="entry name" value="FN3"/>
    <property type="match status" value="1"/>
</dbReference>
<dbReference type="FunFam" id="2.10.25.10:FF:000288">
    <property type="entry name" value="Astrotactin 2"/>
    <property type="match status" value="1"/>
</dbReference>
<dbReference type="Gene3D" id="2.10.25.10">
    <property type="entry name" value="Laminin"/>
    <property type="match status" value="1"/>
</dbReference>
<dbReference type="InterPro" id="IPR040685">
    <property type="entry name" value="Annexin-like"/>
</dbReference>
<dbReference type="InterPro" id="IPR045574">
    <property type="entry name" value="ASTN1_2_Fn3"/>
</dbReference>
<dbReference type="InterPro" id="IPR045575">
    <property type="entry name" value="ASTN_1_2_N"/>
</dbReference>
<dbReference type="InterPro" id="IPR040510">
    <property type="entry name" value="ASTN_2_hairpin"/>
</dbReference>
<dbReference type="InterPro" id="IPR026995">
    <property type="entry name" value="Astrotactin"/>
</dbReference>
<dbReference type="InterPro" id="IPR003961">
    <property type="entry name" value="FN3_dom"/>
</dbReference>
<dbReference type="InterPro" id="IPR036116">
    <property type="entry name" value="FN3_sf"/>
</dbReference>
<dbReference type="InterPro" id="IPR020864">
    <property type="entry name" value="MACPF"/>
</dbReference>
<dbReference type="PANTHER" id="PTHR16592">
    <property type="entry name" value="ASTROTACTIN-1-LIKE"/>
    <property type="match status" value="1"/>
</dbReference>
<dbReference type="PANTHER" id="PTHR16592:SF2">
    <property type="entry name" value="ASTROTACTIN-2"/>
    <property type="match status" value="1"/>
</dbReference>
<dbReference type="Pfam" id="PF18411">
    <property type="entry name" value="Annexin_2"/>
    <property type="match status" value="1"/>
</dbReference>
<dbReference type="Pfam" id="PF19743">
    <property type="entry name" value="ASTN1_2_fn3"/>
    <property type="match status" value="1"/>
</dbReference>
<dbReference type="Pfam" id="PF19441">
    <property type="entry name" value="ASTN_1_2_N"/>
    <property type="match status" value="1"/>
</dbReference>
<dbReference type="Pfam" id="PF18577">
    <property type="entry name" value="ASTN_2_hairpin"/>
    <property type="match status" value="1"/>
</dbReference>
<dbReference type="Pfam" id="PF01823">
    <property type="entry name" value="MACPF"/>
    <property type="match status" value="1"/>
</dbReference>
<dbReference type="SMART" id="SM00457">
    <property type="entry name" value="MACPF"/>
    <property type="match status" value="1"/>
</dbReference>
<dbReference type="SUPFAM" id="SSF49265">
    <property type="entry name" value="Fibronectin type III"/>
    <property type="match status" value="1"/>
</dbReference>
<reference key="1">
    <citation type="journal article" date="2004" name="DNA Res.">
        <title>Prediction of the coding sequences of mouse homologues of KIAA gene: IV. The complete nucleotide sequences of 500 mouse KIAA-homologous cDNAs identified by screening of terminal sequences of cDNA clones randomly sampled from size-fractionated libraries.</title>
        <authorList>
            <person name="Okazaki N."/>
            <person name="Kikuno R."/>
            <person name="Ohara R."/>
            <person name="Inamoto S."/>
            <person name="Koseki H."/>
            <person name="Hiraoka S."/>
            <person name="Saga Y."/>
            <person name="Seino S."/>
            <person name="Nishimura M."/>
            <person name="Kaisho T."/>
            <person name="Hoshino K."/>
            <person name="Kitamura H."/>
            <person name="Nagase T."/>
            <person name="Ohara O."/>
            <person name="Koga H."/>
        </authorList>
    </citation>
    <scope>NUCLEOTIDE SEQUENCE [LARGE SCALE MRNA] (ISOFORM 2)</scope>
    <source>
        <tissue>Brain</tissue>
    </source>
</reference>
<reference key="2">
    <citation type="journal article" date="2009" name="PLoS Biol.">
        <title>Lineage-specific biology revealed by a finished genome assembly of the mouse.</title>
        <authorList>
            <person name="Church D.M."/>
            <person name="Goodstadt L."/>
            <person name="Hillier L.W."/>
            <person name="Zody M.C."/>
            <person name="Goldstein S."/>
            <person name="She X."/>
            <person name="Bult C.J."/>
            <person name="Agarwala R."/>
            <person name="Cherry J.L."/>
            <person name="DiCuccio M."/>
            <person name="Hlavina W."/>
            <person name="Kapustin Y."/>
            <person name="Meric P."/>
            <person name="Maglott D."/>
            <person name="Birtle Z."/>
            <person name="Marques A.C."/>
            <person name="Graves T."/>
            <person name="Zhou S."/>
            <person name="Teague B."/>
            <person name="Potamousis K."/>
            <person name="Churas C."/>
            <person name="Place M."/>
            <person name="Herschleb J."/>
            <person name="Runnheim R."/>
            <person name="Forrest D."/>
            <person name="Amos-Landgraf J."/>
            <person name="Schwartz D.C."/>
            <person name="Cheng Z."/>
            <person name="Lindblad-Toh K."/>
            <person name="Eichler E.E."/>
            <person name="Ponting C.P."/>
        </authorList>
    </citation>
    <scope>NUCLEOTIDE SEQUENCE [LARGE SCALE GENOMIC DNA]</scope>
    <source>
        <strain>C57BL/6J</strain>
    </source>
</reference>
<reference key="3">
    <citation type="journal article" date="2010" name="Cell">
        <title>A tissue-specific atlas of mouse protein phosphorylation and expression.</title>
        <authorList>
            <person name="Huttlin E.L."/>
            <person name="Jedrychowski M.P."/>
            <person name="Elias J.E."/>
            <person name="Goswami T."/>
            <person name="Rad R."/>
            <person name="Beausoleil S.A."/>
            <person name="Villen J."/>
            <person name="Haas W."/>
            <person name="Sowa M.E."/>
            <person name="Gygi S.P."/>
        </authorList>
    </citation>
    <scope>IDENTIFICATION BY MASS SPECTROMETRY [LARGE SCALE ANALYSIS]</scope>
    <source>
        <tissue>Brain</tissue>
    </source>
</reference>
<reference key="4">
    <citation type="journal article" date="2010" name="J. Neurosci.">
        <title>Astn2, a novel member of the astrotactin gene family, regulates the trafficking of ASTN1 during glial-guided neuronal migration.</title>
        <authorList>
            <person name="Wilson P.M."/>
            <person name="Fryer R.H."/>
            <person name="Fang Y."/>
            <person name="Hatten M.E."/>
        </authorList>
    </citation>
    <scope>FUNCTION</scope>
    <scope>SUBCELLULAR LOCATION</scope>
    <scope>TOPOLOGY</scope>
    <scope>INTERACTION WITH ASTN1</scope>
    <scope>TISSUE SPECIFICITY</scope>
    <scope>DEVELOPMENTAL STAGE</scope>
    <scope>ALTERNATIVE SPLICING</scope>
    <scope>IDENTIFICATION OF ISOFORM 3</scope>
</reference>
<proteinExistence type="evidence at protein level"/>
<protein>
    <recommendedName>
        <fullName>Astrotactin-2</fullName>
    </recommendedName>
</protein>
<comment type="function">
    <text evidence="2 5">Mediates recycling of the neuronal cell adhesion molecule ASTN1 to the anterior pole of the cell membrane in migrating neurons. Promotes ASTN1 internalization and intracellular transport of endocytosed ASTN1 (PubMed:20573900). Selectively binds inositol-4,5-bisphosphate, inositol-3,4,5-trisphosphate and inositol-1,3,4,5-tetrakisphosphate, suggesting it is recruited to membranes that contain lipids with a phosphoinositide headgroup (By similarity).</text>
</comment>
<comment type="subunit">
    <text evidence="5">Interacts with ASTN1; the interaction is not calcium-dependent.</text>
</comment>
<comment type="subcellular location">
    <subcellularLocation>
        <location evidence="5">Membrane</location>
        <topology evidence="8">Multi-pass membrane protein</topology>
    </subcellularLocation>
    <subcellularLocation>
        <location evidence="5">Perikaryon</location>
    </subcellularLocation>
    <subcellularLocation>
        <location evidence="5">Cytoplasm</location>
        <location evidence="5">Cell cortex</location>
    </subcellularLocation>
    <subcellularLocation>
        <location evidence="5">Early endosome</location>
    </subcellularLocation>
    <subcellularLocation>
        <location evidence="5">Late endosome</location>
    </subcellularLocation>
    <subcellularLocation>
        <location evidence="9">Cytoplasmic vesicle</location>
        <location evidence="9">Clathrin-coated vesicle</location>
    </subcellularLocation>
    <subcellularLocation>
        <location evidence="5">Cytoplasmic vesicle</location>
    </subcellularLocation>
    <text evidence="5">Integral membrane protein not detected at the cell membrane. Detected in cytoplasmic vesicles in the cell cortex, close to the anterior pole of migrating neurons. Detected at the base of the leading process in migrating neurons.</text>
</comment>
<comment type="alternative products">
    <event type="alternative splicing"/>
    <isoform>
        <id>Q80Z10-1</id>
        <name>1</name>
        <sequence type="displayed"/>
    </isoform>
    <isoform>
        <id>Q80Z10-2</id>
        <name>2</name>
        <sequence type="described" ref="VSP_028938"/>
    </isoform>
    <isoform>
        <id>Q80Z10-3</id>
        <name>3</name>
        <name evidence="7">a</name>
        <sequence type="described" ref="VSP_058454"/>
    </isoform>
</comment>
<comment type="tissue specificity">
    <text evidence="5">Detected in cerebellum granule neurons; not detected in astroglia (at protein level). Detected primarily in cerebellum, and at lower levels in brain cortex, olfactory bulb, hindbrain and hippocampus dentate gyrus. Between 6 and 10 days after birth, when granule cell migration occurs in the cerebellum, detected in granule cell precursors in the external germinal layer, the molecular layer, the internal granule layer and in Purkinje neurons. Detected in postmitotic neurons in adult cerebellum.</text>
</comment>
<comment type="developmental stage">
    <text evidence="5">Detected at low levels in embryonic brain. Highly expressed 6 and 10 days after birth, when granule cell migration occurs in the cerebellum; expression in cerebellum is considerably higher than in brain cortex. Expressed at lower levels in adult cerebellum.</text>
</comment>
<comment type="domain">
    <text evidence="2">The C-terminal region after the fibronectin type-III domain presents structural similarity to annexin domains and binds calcium ions.</text>
</comment>
<comment type="similarity">
    <text evidence="8">Belongs to the astrotactin family.</text>
</comment>
<comment type="sequence caution" evidence="8">
    <conflict type="erroneous initiation">
        <sequence resource="EMBL-CDS" id="BAD32265"/>
    </conflict>
    <text>Extended N-terminus.</text>
</comment>
<gene>
    <name type="primary">Astn2</name>
    <name type="synonym">Kiaa0634</name>
</gene>
<accession>Q80Z10</accession>
<accession>E9Q8T4</accession>
<accession>Q6A031</accession>
<accession>Q811X9</accession>
<accession>Q811Y0</accession>
<accession>Q811Y1</accession>
<accession>Q811Y2</accession>
<feature type="signal peptide" evidence="3">
    <location>
        <begin position="1"/>
        <end position="51"/>
    </location>
</feature>
<feature type="chain" id="PRO_0000308253" description="Astrotactin-2">
    <location>
        <begin position="52"/>
        <end position="1352"/>
    </location>
</feature>
<feature type="topological domain" description="Lumenal" evidence="8">
    <location>
        <begin position="52"/>
        <end position="218"/>
    </location>
</feature>
<feature type="transmembrane region" description="Helical" evidence="3">
    <location>
        <begin position="219"/>
        <end position="239"/>
    </location>
</feature>
<feature type="topological domain" description="Cytoplasmic" evidence="8">
    <location>
        <begin position="240"/>
        <end position="447"/>
    </location>
</feature>
<feature type="transmembrane region" description="Helical" evidence="3">
    <location>
        <begin position="448"/>
        <end position="468"/>
    </location>
</feature>
<feature type="topological domain" description="Lumenal" evidence="9">
    <location>
        <begin position="469"/>
        <end position="1352"/>
    </location>
</feature>
<feature type="domain" description="EGF-like 1">
    <location>
        <begin position="523"/>
        <end position="563"/>
    </location>
</feature>
<feature type="domain" description="EGF-like 2">
    <location>
        <begin position="664"/>
        <end position="708"/>
    </location>
</feature>
<feature type="domain" description="EGF-like 3">
    <location>
        <begin position="712"/>
        <end position="764"/>
    </location>
</feature>
<feature type="domain" description="Fibronectin type-III">
    <location>
        <begin position="1079"/>
        <end position="1201"/>
    </location>
</feature>
<feature type="region of interest" description="Disordered" evidence="4">
    <location>
        <begin position="1"/>
        <end position="31"/>
    </location>
</feature>
<feature type="region of interest" description="Disordered" evidence="4">
    <location>
        <begin position="308"/>
        <end position="327"/>
    </location>
</feature>
<feature type="region of interest" description="Disordered" evidence="4">
    <location>
        <begin position="375"/>
        <end position="421"/>
    </location>
</feature>
<feature type="compositionally biased region" description="Polar residues" evidence="4">
    <location>
        <begin position="383"/>
        <end position="392"/>
    </location>
</feature>
<feature type="glycosylation site" description="N-linked (GlcNAc...) asparagine" evidence="3">
    <location>
        <position position="180"/>
    </location>
</feature>
<feature type="glycosylation site" description="N-linked (GlcNAc...) asparagine" evidence="3">
    <location>
        <position position="796"/>
    </location>
</feature>
<feature type="glycosylation site" description="N-linked (GlcNAc...) asparagine" evidence="3">
    <location>
        <position position="1033"/>
    </location>
</feature>
<feature type="disulfide bond" evidence="1">
    <location>
        <begin position="527"/>
        <end position="539"/>
    </location>
</feature>
<feature type="disulfide bond" evidence="1">
    <location>
        <begin position="535"/>
        <end position="546"/>
    </location>
</feature>
<feature type="disulfide bond" evidence="1">
    <location>
        <begin position="548"/>
        <end position="562"/>
    </location>
</feature>
<feature type="disulfide bond" evidence="1">
    <location>
        <begin position="668"/>
        <end position="681"/>
    </location>
</feature>
<feature type="disulfide bond" evidence="1">
    <location>
        <begin position="675"/>
        <end position="692"/>
    </location>
</feature>
<feature type="disulfide bond" evidence="1">
    <location>
        <begin position="694"/>
        <end position="707"/>
    </location>
</feature>
<feature type="disulfide bond" evidence="1">
    <location>
        <begin position="716"/>
        <end position="728"/>
    </location>
</feature>
<feature type="disulfide bond" evidence="1">
    <location>
        <begin position="724"/>
        <end position="748"/>
    </location>
</feature>
<feature type="disulfide bond" evidence="1">
    <location>
        <begin position="750"/>
        <end position="763"/>
    </location>
</feature>
<feature type="disulfide bond" evidence="2">
    <location>
        <begin position="838"/>
        <end position="1000"/>
    </location>
</feature>
<feature type="disulfide bond" evidence="2">
    <location>
        <begin position="929"/>
        <end position="990"/>
    </location>
</feature>
<feature type="disulfide bond" evidence="2">
    <location>
        <begin position="996"/>
        <end position="1003"/>
    </location>
</feature>
<feature type="disulfide bond" evidence="2">
    <location>
        <begin position="1049"/>
        <end position="1060"/>
    </location>
</feature>
<feature type="disulfide bond" evidence="2">
    <location>
        <begin position="1062"/>
        <end position="1075"/>
    </location>
</feature>
<feature type="disulfide bond" evidence="2">
    <location>
        <begin position="1149"/>
        <end position="1171"/>
    </location>
</feature>
<feature type="disulfide bond" evidence="2">
    <location>
        <begin position="1203"/>
        <end position="1290"/>
    </location>
</feature>
<feature type="disulfide bond" evidence="2">
    <location>
        <begin position="1311"/>
        <end position="1334"/>
    </location>
</feature>
<feature type="splice variant" id="VSP_058454" description="In isoform 3." evidence="7 8">
    <location>
        <begin position="351"/>
        <end position="402"/>
    </location>
</feature>
<feature type="splice variant" id="VSP_028938" description="In isoform 2." evidence="6">
    <location>
        <begin position="597"/>
        <end position="600"/>
    </location>
</feature>
<sequence>MAAAGARRSPGRGLGLRGRPRLGFHPGPPPPPPPPLLLLFLLLLPPPPLLAGATAAAASREPDSPCRLKTVTVSTLPALRESDIGWSGARTGAAAGAGAGTGAGAGAAAAAASAASPGSAGSAGTAAESRLLLFVRNELPGRIAVQDDLDNTELPFFTLEMSGTAADISLVHWRQQWLENGTLYFHVSMSSSGQLAQATAPTLQEPSEIVEEQMHILHISVMGGLIALLLLLLVFTVALYAQRRWQKRRRIPQKSASTEATHEIHYIPSVLLGPQARESFRSSRLQTHNSVIGVPIRETPILDDYDYEEEEEPPRRANHVSREDEFGSQMTHALDSLGRPGEEKVEFEKKAAAEATQETVESLMQKFKESFRANTPVEIGQLQPASRSSTSAGKRKRRNKSRGGISFGRTKGTSGSEADDETQLTFYTEQYRSRRRSKGLLKSPVNKTALTLIAVSSCILAMVCGNQMSCPLTVKVTLHVPEHFIADGSSFVVSEGSYLDISDWLNPAKLSLYYQINATSPWVRDLCGQRTTDACEQLCDPDTGECSCHEGYAPDPVHRHLCVRSDWGQSEGPWPYTTLERGYDLVTGEQAPEKILRSTFSLGQGLWLPVSKSFVVPPVELSINPLASCKTDVLVTEDPADVREEAMLSTYFETINDLLSSFGPVRDCSRNNGGCTRNFKCVSDRQVDSSGCVCPEELKPMKDGSGCYDHSKGIDCSDGFNGGCEQLCLQQTLPLPYDTTSSTIFMFCGCVEEYKLAPDGKSCLMLSDVCEGPKCLKPDSKFNDTLFGEMLHGYNNRTQHVNQGQVFQMTFRENNFIKDFPQLADGLLVIPLPVEEQCRGVLSEPLPDLQLLTGDIRYDEAMGYPMVQQWRVRSNLYRVKLSTITLSAGFTNVLKILTKESSRDELLSFIQHYGSHYIAEALYGSELTCIIHFPSKKVQQQLWLQYQKETTELGSKKELKSMPFITYLSGLLTAQMLSDDQLISGVEIRCEEKGRCPSTCHLCRRPGKEQLSPTPVLLEINRVVPLYTLIQDNGTKEAFKNALMSSYWCSGKGDVIDDWCRCDLSAFDASGLPNCSPLPQPVLRLSPTVEPSSTVVSLEWVDVQPAIGTKVSDYILQHKKVDEYTDTDLYTGEFLSFADDLLSGLGTSCVAAGRSHGEVPEVSIYSVIFKCLEPDGLYKFTLYAVDTRGRHSELSTVTLRTACPLVDDNKAEEIADKIYNLYNGYTSGKEQQTAYNTLMEVSASMLFRVQHHYNSHYEKFGDFVWRSEDELGPRKAHLILRRLERVSSHCSSLLRSAYIQSRVDTIPYLFCRSEEVRPAGMVWYSILKDTKITCEEKMVSMARNTYGETKGR</sequence>
<keyword id="KW-0025">Alternative splicing</keyword>
<keyword id="KW-0106">Calcium</keyword>
<keyword id="KW-0963">Cytoplasm</keyword>
<keyword id="KW-0968">Cytoplasmic vesicle</keyword>
<keyword id="KW-1015">Disulfide bond</keyword>
<keyword id="KW-0245">EGF-like domain</keyword>
<keyword id="KW-0967">Endosome</keyword>
<keyword id="KW-0325">Glycoprotein</keyword>
<keyword id="KW-0472">Membrane</keyword>
<keyword id="KW-0479">Metal-binding</keyword>
<keyword id="KW-0653">Protein transport</keyword>
<keyword id="KW-1185">Reference proteome</keyword>
<keyword id="KW-0677">Repeat</keyword>
<keyword id="KW-0732">Signal</keyword>
<keyword id="KW-0812">Transmembrane</keyword>
<keyword id="KW-1133">Transmembrane helix</keyword>
<keyword id="KW-0813">Transport</keyword>
<organism>
    <name type="scientific">Mus musculus</name>
    <name type="common">Mouse</name>
    <dbReference type="NCBI Taxonomy" id="10090"/>
    <lineage>
        <taxon>Eukaryota</taxon>
        <taxon>Metazoa</taxon>
        <taxon>Chordata</taxon>
        <taxon>Craniata</taxon>
        <taxon>Vertebrata</taxon>
        <taxon>Euteleostomi</taxon>
        <taxon>Mammalia</taxon>
        <taxon>Eutheria</taxon>
        <taxon>Euarchontoglires</taxon>
        <taxon>Glires</taxon>
        <taxon>Rodentia</taxon>
        <taxon>Myomorpha</taxon>
        <taxon>Muroidea</taxon>
        <taxon>Muridae</taxon>
        <taxon>Murinae</taxon>
        <taxon>Mus</taxon>
        <taxon>Mus</taxon>
    </lineage>
</organism>